<dbReference type="EC" id="6.1.1.5" evidence="1"/>
<dbReference type="EMBL" id="AP008934">
    <property type="protein sequence ID" value="BAE18723.1"/>
    <property type="molecule type" value="Genomic_DNA"/>
</dbReference>
<dbReference type="RefSeq" id="WP_011303319.1">
    <property type="nucleotide sequence ID" value="NZ_MTGA01000034.1"/>
</dbReference>
<dbReference type="SMR" id="Q49WX5"/>
<dbReference type="GeneID" id="3615322"/>
<dbReference type="KEGG" id="ssp:SSP1578"/>
<dbReference type="PATRIC" id="fig|342451.11.peg.1580"/>
<dbReference type="eggNOG" id="COG0060">
    <property type="taxonomic scope" value="Bacteria"/>
</dbReference>
<dbReference type="HOGENOM" id="CLU_001493_7_0_9"/>
<dbReference type="OrthoDB" id="9810365at2"/>
<dbReference type="Proteomes" id="UP000006371">
    <property type="component" value="Chromosome"/>
</dbReference>
<dbReference type="GO" id="GO:0005829">
    <property type="term" value="C:cytosol"/>
    <property type="evidence" value="ECO:0007669"/>
    <property type="project" value="TreeGrafter"/>
</dbReference>
<dbReference type="GO" id="GO:0002161">
    <property type="term" value="F:aminoacyl-tRNA deacylase activity"/>
    <property type="evidence" value="ECO:0007669"/>
    <property type="project" value="InterPro"/>
</dbReference>
<dbReference type="GO" id="GO:0005524">
    <property type="term" value="F:ATP binding"/>
    <property type="evidence" value="ECO:0007669"/>
    <property type="project" value="UniProtKB-UniRule"/>
</dbReference>
<dbReference type="GO" id="GO:0004822">
    <property type="term" value="F:isoleucine-tRNA ligase activity"/>
    <property type="evidence" value="ECO:0007669"/>
    <property type="project" value="UniProtKB-UniRule"/>
</dbReference>
<dbReference type="GO" id="GO:0000049">
    <property type="term" value="F:tRNA binding"/>
    <property type="evidence" value="ECO:0007669"/>
    <property type="project" value="InterPro"/>
</dbReference>
<dbReference type="GO" id="GO:0008270">
    <property type="term" value="F:zinc ion binding"/>
    <property type="evidence" value="ECO:0007669"/>
    <property type="project" value="UniProtKB-UniRule"/>
</dbReference>
<dbReference type="GO" id="GO:0006428">
    <property type="term" value="P:isoleucyl-tRNA aminoacylation"/>
    <property type="evidence" value="ECO:0007669"/>
    <property type="project" value="UniProtKB-UniRule"/>
</dbReference>
<dbReference type="CDD" id="cd07960">
    <property type="entry name" value="Anticodon_Ia_Ile_BEm"/>
    <property type="match status" value="1"/>
</dbReference>
<dbReference type="CDD" id="cd00818">
    <property type="entry name" value="IleRS_core"/>
    <property type="match status" value="1"/>
</dbReference>
<dbReference type="FunFam" id="1.10.10.830:FF:000001">
    <property type="entry name" value="Isoleucine--tRNA ligase"/>
    <property type="match status" value="1"/>
</dbReference>
<dbReference type="FunFam" id="1.10.730.20:FF:000001">
    <property type="entry name" value="Isoleucine--tRNA ligase"/>
    <property type="match status" value="1"/>
</dbReference>
<dbReference type="FunFam" id="3.40.50.620:FF:000152">
    <property type="entry name" value="Isoleucine--tRNA ligase"/>
    <property type="match status" value="1"/>
</dbReference>
<dbReference type="FunFam" id="3.90.740.10:FF:000006">
    <property type="entry name" value="Isoleucine--tRNA ligase"/>
    <property type="match status" value="1"/>
</dbReference>
<dbReference type="Gene3D" id="1.10.730.20">
    <property type="match status" value="1"/>
</dbReference>
<dbReference type="Gene3D" id="3.40.50.620">
    <property type="entry name" value="HUPs"/>
    <property type="match status" value="2"/>
</dbReference>
<dbReference type="Gene3D" id="1.10.10.830">
    <property type="entry name" value="Ile-tRNA synthetase CP2 domain-like"/>
    <property type="match status" value="1"/>
</dbReference>
<dbReference type="Gene3D" id="3.90.740.10">
    <property type="entry name" value="Valyl/Leucyl/Isoleucyl-tRNA synthetase, editing domain"/>
    <property type="match status" value="1"/>
</dbReference>
<dbReference type="HAMAP" id="MF_02002">
    <property type="entry name" value="Ile_tRNA_synth_type1"/>
    <property type="match status" value="1"/>
</dbReference>
<dbReference type="InterPro" id="IPR001412">
    <property type="entry name" value="aa-tRNA-synth_I_CS"/>
</dbReference>
<dbReference type="InterPro" id="IPR002300">
    <property type="entry name" value="aa-tRNA-synth_Ia"/>
</dbReference>
<dbReference type="InterPro" id="IPR033708">
    <property type="entry name" value="Anticodon_Ile_BEm"/>
</dbReference>
<dbReference type="InterPro" id="IPR002301">
    <property type="entry name" value="Ile-tRNA-ligase"/>
</dbReference>
<dbReference type="InterPro" id="IPR023585">
    <property type="entry name" value="Ile-tRNA-ligase_type1"/>
</dbReference>
<dbReference type="InterPro" id="IPR050081">
    <property type="entry name" value="Ile-tRNA_ligase"/>
</dbReference>
<dbReference type="InterPro" id="IPR013155">
    <property type="entry name" value="M/V/L/I-tRNA-synth_anticd-bd"/>
</dbReference>
<dbReference type="InterPro" id="IPR014729">
    <property type="entry name" value="Rossmann-like_a/b/a_fold"/>
</dbReference>
<dbReference type="InterPro" id="IPR009080">
    <property type="entry name" value="tRNAsynth_Ia_anticodon-bd"/>
</dbReference>
<dbReference type="InterPro" id="IPR009008">
    <property type="entry name" value="Val/Leu/Ile-tRNA-synth_edit"/>
</dbReference>
<dbReference type="InterPro" id="IPR010663">
    <property type="entry name" value="Znf_FPG/IleRS"/>
</dbReference>
<dbReference type="NCBIfam" id="TIGR00392">
    <property type="entry name" value="ileS"/>
    <property type="match status" value="1"/>
</dbReference>
<dbReference type="PANTHER" id="PTHR42765:SF1">
    <property type="entry name" value="ISOLEUCINE--TRNA LIGASE, MITOCHONDRIAL"/>
    <property type="match status" value="1"/>
</dbReference>
<dbReference type="PANTHER" id="PTHR42765">
    <property type="entry name" value="SOLEUCYL-TRNA SYNTHETASE"/>
    <property type="match status" value="1"/>
</dbReference>
<dbReference type="Pfam" id="PF08264">
    <property type="entry name" value="Anticodon_1"/>
    <property type="match status" value="1"/>
</dbReference>
<dbReference type="Pfam" id="PF00133">
    <property type="entry name" value="tRNA-synt_1"/>
    <property type="match status" value="1"/>
</dbReference>
<dbReference type="Pfam" id="PF06827">
    <property type="entry name" value="zf-FPG_IleRS"/>
    <property type="match status" value="1"/>
</dbReference>
<dbReference type="PRINTS" id="PR00984">
    <property type="entry name" value="TRNASYNTHILE"/>
</dbReference>
<dbReference type="SUPFAM" id="SSF47323">
    <property type="entry name" value="Anticodon-binding domain of a subclass of class I aminoacyl-tRNA synthetases"/>
    <property type="match status" value="1"/>
</dbReference>
<dbReference type="SUPFAM" id="SSF52374">
    <property type="entry name" value="Nucleotidylyl transferase"/>
    <property type="match status" value="1"/>
</dbReference>
<dbReference type="SUPFAM" id="SSF50677">
    <property type="entry name" value="ValRS/IleRS/LeuRS editing domain"/>
    <property type="match status" value="1"/>
</dbReference>
<dbReference type="PROSITE" id="PS00178">
    <property type="entry name" value="AA_TRNA_LIGASE_I"/>
    <property type="match status" value="1"/>
</dbReference>
<name>SYI_STAS1</name>
<keyword id="KW-0030">Aminoacyl-tRNA synthetase</keyword>
<keyword id="KW-0067">ATP-binding</keyword>
<keyword id="KW-0963">Cytoplasm</keyword>
<keyword id="KW-0436">Ligase</keyword>
<keyword id="KW-0479">Metal-binding</keyword>
<keyword id="KW-0547">Nucleotide-binding</keyword>
<keyword id="KW-0648">Protein biosynthesis</keyword>
<keyword id="KW-1185">Reference proteome</keyword>
<keyword id="KW-0862">Zinc</keyword>
<organism>
    <name type="scientific">Staphylococcus saprophyticus subsp. saprophyticus (strain ATCC 15305 / DSM 20229 / NCIMB 8711 / NCTC 7292 / S-41)</name>
    <dbReference type="NCBI Taxonomy" id="342451"/>
    <lineage>
        <taxon>Bacteria</taxon>
        <taxon>Bacillati</taxon>
        <taxon>Bacillota</taxon>
        <taxon>Bacilli</taxon>
        <taxon>Bacillales</taxon>
        <taxon>Staphylococcaceae</taxon>
        <taxon>Staphylococcus</taxon>
    </lineage>
</organism>
<reference key="1">
    <citation type="journal article" date="2005" name="Proc. Natl. Acad. Sci. U.S.A.">
        <title>Whole genome sequence of Staphylococcus saprophyticus reveals the pathogenesis of uncomplicated urinary tract infection.</title>
        <authorList>
            <person name="Kuroda M."/>
            <person name="Yamashita A."/>
            <person name="Hirakawa H."/>
            <person name="Kumano M."/>
            <person name="Morikawa K."/>
            <person name="Higashide M."/>
            <person name="Maruyama A."/>
            <person name="Inose Y."/>
            <person name="Matoba K."/>
            <person name="Toh H."/>
            <person name="Kuhara S."/>
            <person name="Hattori M."/>
            <person name="Ohta T."/>
        </authorList>
    </citation>
    <scope>NUCLEOTIDE SEQUENCE [LARGE SCALE GENOMIC DNA]</scope>
    <source>
        <strain>ATCC 15305 / DSM 20229 / NCIMB 8711 / NCTC 7292 / S-41</strain>
    </source>
</reference>
<protein>
    <recommendedName>
        <fullName evidence="1">Isoleucine--tRNA ligase</fullName>
        <ecNumber evidence="1">6.1.1.5</ecNumber>
    </recommendedName>
    <alternativeName>
        <fullName evidence="1">Isoleucyl-tRNA synthetase</fullName>
        <shortName evidence="1">IleRS</shortName>
    </alternativeName>
</protein>
<proteinExistence type="inferred from homology"/>
<sequence>MDYKDTLLMPKTDFPMRGGLPNKEPKIQEEWDAKNIYQKVLDKNEGNPSFILHDGPPYANGNLHMGHALNKILKDIITRYKSMLGYYAPYVPGWDTHGLPIEQALTKKGVKRKELSIAEFRKKCEAFALEQIDNQKKDFKRLGVKGDFNNPYITLKPEYEAAQIRLFGEMADKGLIYKGKKPVYWSPSSESSLAEAEIEYQDKRSPSIYVAFDVIDGKGIVDDDAQFIIWTTTPWTLPSNVAITVHPDLTYGQYNVNGKKYIIGKDLASDVAEALDWDEDTLELEKEFKGKDLEYIKAQHPFFDRESLVINGLHVTTDAGTGCVHTAPGHGEDDYIVGQKYNLPVISPVDDKGVFTDEAGQFEGMFYDKANKEITDLLKEDGSLLKLEFITHSYPHDWRTKKPVIFRATPQWFASIDKVREDILSAIDDTQFKVDWGKTRIYNMIRDRGEWVISRQRVWGVPLPVFYAENGDIIMTSETVNHVADLFEANGSNIWFEREAKDLLPEGFTHPGSPNGEFTKETDIMDVWFDSGSSHRGVLEARPELSYPADLYLEGSDQYRGWFNSSITTSVATRGQSPYKMLLSHGFVMDGEGKKMSKSLGNVIVPDQIVKQKGADIARLWVSSVDYLADVRISDEILKQSSDVYRKIRNTLRFMLGNVSDYNPATDAIAEKDLLEVDKYLLNRLREFTANTLDHYDNYDYLDIYQEVQNFINVELSNFYLDYGKDILYIEERDSHKRRSMQTVLYQIVVDMTKLLAPILVHTAEEVWSHIPHVEEESVHLTNMPERVEIDQAFVDRWNTFMKLRDDVNRALEVARNEKVIGKSLEAKVVIGSNENFDATTFLQQFKDLQQLFITSQAEVVDKVDDGVAYQHGDIRIEHAHGEKCERCWNYSEELGSVGELDNLCPRCQAVVKTLV</sequence>
<accession>Q49WX5</accession>
<feature type="chain" id="PRO_0000098474" description="Isoleucine--tRNA ligase">
    <location>
        <begin position="1"/>
        <end position="916"/>
    </location>
</feature>
<feature type="short sequence motif" description="'HIGH' region">
    <location>
        <begin position="57"/>
        <end position="67"/>
    </location>
</feature>
<feature type="short sequence motif" description="'KMSKS' region">
    <location>
        <begin position="595"/>
        <end position="599"/>
    </location>
</feature>
<feature type="binding site" evidence="1">
    <location>
        <position position="554"/>
    </location>
    <ligand>
        <name>L-isoleucyl-5'-AMP</name>
        <dbReference type="ChEBI" id="CHEBI:178002"/>
    </ligand>
</feature>
<feature type="binding site" evidence="1">
    <location>
        <position position="598"/>
    </location>
    <ligand>
        <name>ATP</name>
        <dbReference type="ChEBI" id="CHEBI:30616"/>
    </ligand>
</feature>
<feature type="binding site" evidence="1">
    <location>
        <position position="885"/>
    </location>
    <ligand>
        <name>Zn(2+)</name>
        <dbReference type="ChEBI" id="CHEBI:29105"/>
    </ligand>
</feature>
<feature type="binding site" evidence="1">
    <location>
        <position position="888"/>
    </location>
    <ligand>
        <name>Zn(2+)</name>
        <dbReference type="ChEBI" id="CHEBI:29105"/>
    </ligand>
</feature>
<feature type="binding site" evidence="1">
    <location>
        <position position="905"/>
    </location>
    <ligand>
        <name>Zn(2+)</name>
        <dbReference type="ChEBI" id="CHEBI:29105"/>
    </ligand>
</feature>
<feature type="binding site" evidence="1">
    <location>
        <position position="908"/>
    </location>
    <ligand>
        <name>Zn(2+)</name>
        <dbReference type="ChEBI" id="CHEBI:29105"/>
    </ligand>
</feature>
<comment type="function">
    <text evidence="1">Catalyzes the attachment of isoleucine to tRNA(Ile). As IleRS can inadvertently accommodate and process structurally similar amino acids such as valine, to avoid such errors it has two additional distinct tRNA(Ile)-dependent editing activities. One activity is designated as 'pretransfer' editing and involves the hydrolysis of activated Val-AMP. The other activity is designated 'posttransfer' editing and involves deacylation of mischarged Val-tRNA(Ile).</text>
</comment>
<comment type="catalytic activity">
    <reaction evidence="1">
        <text>tRNA(Ile) + L-isoleucine + ATP = L-isoleucyl-tRNA(Ile) + AMP + diphosphate</text>
        <dbReference type="Rhea" id="RHEA:11060"/>
        <dbReference type="Rhea" id="RHEA-COMP:9666"/>
        <dbReference type="Rhea" id="RHEA-COMP:9695"/>
        <dbReference type="ChEBI" id="CHEBI:30616"/>
        <dbReference type="ChEBI" id="CHEBI:33019"/>
        <dbReference type="ChEBI" id="CHEBI:58045"/>
        <dbReference type="ChEBI" id="CHEBI:78442"/>
        <dbReference type="ChEBI" id="CHEBI:78528"/>
        <dbReference type="ChEBI" id="CHEBI:456215"/>
        <dbReference type="EC" id="6.1.1.5"/>
    </reaction>
</comment>
<comment type="cofactor">
    <cofactor evidence="1">
        <name>Zn(2+)</name>
        <dbReference type="ChEBI" id="CHEBI:29105"/>
    </cofactor>
    <text evidence="1">Binds 1 zinc ion per subunit.</text>
</comment>
<comment type="subunit">
    <text evidence="1">Monomer.</text>
</comment>
<comment type="subcellular location">
    <subcellularLocation>
        <location evidence="1">Cytoplasm</location>
    </subcellularLocation>
</comment>
<comment type="domain">
    <text evidence="1">IleRS has two distinct active sites: one for aminoacylation and one for editing. The misactivated valine is translocated from the active site to the editing site, which sterically excludes the correctly activated isoleucine. The single editing site contains two valyl binding pockets, one specific for each substrate (Val-AMP or Val-tRNA(Ile)).</text>
</comment>
<comment type="similarity">
    <text evidence="1">Belongs to the class-I aminoacyl-tRNA synthetase family. IleS type 1 subfamily.</text>
</comment>
<gene>
    <name evidence="1" type="primary">ileS</name>
    <name type="ordered locus">SSP1578</name>
</gene>
<evidence type="ECO:0000255" key="1">
    <source>
        <dbReference type="HAMAP-Rule" id="MF_02002"/>
    </source>
</evidence>